<accession>A1AFA2</accession>
<evidence type="ECO:0000255" key="1">
    <source>
        <dbReference type="HAMAP-Rule" id="MF_00170"/>
    </source>
</evidence>
<name>RPIA_ECOK1</name>
<comment type="function">
    <text evidence="1">Catalyzes the reversible conversion of ribose-5-phosphate to ribulose 5-phosphate.</text>
</comment>
<comment type="catalytic activity">
    <reaction evidence="1">
        <text>aldehydo-D-ribose 5-phosphate = D-ribulose 5-phosphate</text>
        <dbReference type="Rhea" id="RHEA:14657"/>
        <dbReference type="ChEBI" id="CHEBI:58121"/>
        <dbReference type="ChEBI" id="CHEBI:58273"/>
        <dbReference type="EC" id="5.3.1.6"/>
    </reaction>
</comment>
<comment type="pathway">
    <text evidence="1">Carbohydrate degradation; pentose phosphate pathway; D-ribose 5-phosphate from D-ribulose 5-phosphate (non-oxidative stage): step 1/1.</text>
</comment>
<comment type="subunit">
    <text evidence="1">Homodimer.</text>
</comment>
<comment type="similarity">
    <text evidence="1">Belongs to the ribose 5-phosphate isomerase family.</text>
</comment>
<reference key="1">
    <citation type="journal article" date="2007" name="J. Bacteriol.">
        <title>The genome sequence of avian pathogenic Escherichia coli strain O1:K1:H7 shares strong similarities with human extraintestinal pathogenic E. coli genomes.</title>
        <authorList>
            <person name="Johnson T.J."/>
            <person name="Kariyawasam S."/>
            <person name="Wannemuehler Y."/>
            <person name="Mangiamele P."/>
            <person name="Johnson S.J."/>
            <person name="Doetkott C."/>
            <person name="Skyberg J.A."/>
            <person name="Lynne A.M."/>
            <person name="Johnson J.R."/>
            <person name="Nolan L.K."/>
        </authorList>
    </citation>
    <scope>NUCLEOTIDE SEQUENCE [LARGE SCALE GENOMIC DNA]</scope>
</reference>
<protein>
    <recommendedName>
        <fullName evidence="1">Ribose-5-phosphate isomerase A</fullName>
        <ecNumber evidence="1">5.3.1.6</ecNumber>
    </recommendedName>
    <alternativeName>
        <fullName evidence="1">Phosphoriboisomerase A</fullName>
        <shortName evidence="1">PRI</shortName>
    </alternativeName>
</protein>
<dbReference type="EC" id="5.3.1.6" evidence="1"/>
<dbReference type="EMBL" id="CP000468">
    <property type="protein sequence ID" value="ABJ02342.1"/>
    <property type="molecule type" value="Genomic_DNA"/>
</dbReference>
<dbReference type="SMR" id="A1AFA2"/>
<dbReference type="KEGG" id="ecv:APECO1_3615"/>
<dbReference type="HOGENOM" id="CLU_056590_1_1_6"/>
<dbReference type="UniPathway" id="UPA00115">
    <property type="reaction ID" value="UER00412"/>
</dbReference>
<dbReference type="Proteomes" id="UP000008216">
    <property type="component" value="Chromosome"/>
</dbReference>
<dbReference type="GO" id="GO:0005829">
    <property type="term" value="C:cytosol"/>
    <property type="evidence" value="ECO:0007669"/>
    <property type="project" value="TreeGrafter"/>
</dbReference>
<dbReference type="GO" id="GO:0004751">
    <property type="term" value="F:ribose-5-phosphate isomerase activity"/>
    <property type="evidence" value="ECO:0007669"/>
    <property type="project" value="UniProtKB-UniRule"/>
</dbReference>
<dbReference type="GO" id="GO:0006014">
    <property type="term" value="P:D-ribose metabolic process"/>
    <property type="evidence" value="ECO:0007669"/>
    <property type="project" value="TreeGrafter"/>
</dbReference>
<dbReference type="GO" id="GO:0009052">
    <property type="term" value="P:pentose-phosphate shunt, non-oxidative branch"/>
    <property type="evidence" value="ECO:0007669"/>
    <property type="project" value="UniProtKB-UniRule"/>
</dbReference>
<dbReference type="CDD" id="cd01398">
    <property type="entry name" value="RPI_A"/>
    <property type="match status" value="1"/>
</dbReference>
<dbReference type="FunFam" id="3.30.70.260:FF:000004">
    <property type="entry name" value="Ribose-5-phosphate isomerase A"/>
    <property type="match status" value="1"/>
</dbReference>
<dbReference type="FunFam" id="3.40.50.1360:FF:000001">
    <property type="entry name" value="Ribose-5-phosphate isomerase A"/>
    <property type="match status" value="1"/>
</dbReference>
<dbReference type="Gene3D" id="3.30.70.260">
    <property type="match status" value="1"/>
</dbReference>
<dbReference type="Gene3D" id="3.40.50.1360">
    <property type="match status" value="1"/>
</dbReference>
<dbReference type="HAMAP" id="MF_00170">
    <property type="entry name" value="Rib_5P_isom_A"/>
    <property type="match status" value="1"/>
</dbReference>
<dbReference type="InterPro" id="IPR037171">
    <property type="entry name" value="NagB/RpiA_transferase-like"/>
</dbReference>
<dbReference type="InterPro" id="IPR020672">
    <property type="entry name" value="Ribose5P_isomerase_typA_subgr"/>
</dbReference>
<dbReference type="InterPro" id="IPR004788">
    <property type="entry name" value="Ribose5P_isomerase_type_A"/>
</dbReference>
<dbReference type="NCBIfam" id="NF001924">
    <property type="entry name" value="PRK00702.1"/>
    <property type="match status" value="1"/>
</dbReference>
<dbReference type="NCBIfam" id="TIGR00021">
    <property type="entry name" value="rpiA"/>
    <property type="match status" value="1"/>
</dbReference>
<dbReference type="PANTHER" id="PTHR11934">
    <property type="entry name" value="RIBOSE-5-PHOSPHATE ISOMERASE"/>
    <property type="match status" value="1"/>
</dbReference>
<dbReference type="PANTHER" id="PTHR11934:SF0">
    <property type="entry name" value="RIBOSE-5-PHOSPHATE ISOMERASE"/>
    <property type="match status" value="1"/>
</dbReference>
<dbReference type="Pfam" id="PF06026">
    <property type="entry name" value="Rib_5-P_isom_A"/>
    <property type="match status" value="1"/>
</dbReference>
<dbReference type="SUPFAM" id="SSF75445">
    <property type="entry name" value="D-ribose-5-phosphate isomerase (RpiA), lid domain"/>
    <property type="match status" value="1"/>
</dbReference>
<dbReference type="SUPFAM" id="SSF100950">
    <property type="entry name" value="NagB/RpiA/CoA transferase-like"/>
    <property type="match status" value="1"/>
</dbReference>
<sequence>MRVKFHTTGETIMTQDELKKAVGWAALQYVQPGTIVGVGTGSTAAHFIDALGTMKGQIEGAVSSSDASTEKLKSLGIHVFDLNEVDSLGIYVDGADEINGHMQMIKGGGAALTREKIIASVAEKFICIADASKQVDILGKFPLPVEVIPMARSAVARQLVKLGGRPEYRQGVVTDNGNVILDVHGMEILDPIAMENAINAIPGVVTVGLFANRGADVALIGTPDGVKTIVK</sequence>
<feature type="chain" id="PRO_1000097662" description="Ribose-5-phosphate isomerase A">
    <location>
        <begin position="1"/>
        <end position="231"/>
    </location>
</feature>
<feature type="active site" description="Proton acceptor" evidence="1">
    <location>
        <position position="115"/>
    </location>
</feature>
<feature type="binding site" evidence="1">
    <location>
        <begin position="40"/>
        <end position="43"/>
    </location>
    <ligand>
        <name>substrate</name>
    </ligand>
</feature>
<feature type="binding site" evidence="1">
    <location>
        <begin position="93"/>
        <end position="96"/>
    </location>
    <ligand>
        <name>substrate</name>
    </ligand>
</feature>
<feature type="binding site" evidence="1">
    <location>
        <begin position="106"/>
        <end position="109"/>
    </location>
    <ligand>
        <name>substrate</name>
    </ligand>
</feature>
<feature type="binding site" evidence="1">
    <location>
        <position position="133"/>
    </location>
    <ligand>
        <name>substrate</name>
    </ligand>
</feature>
<organism>
    <name type="scientific">Escherichia coli O1:K1 / APEC</name>
    <dbReference type="NCBI Taxonomy" id="405955"/>
    <lineage>
        <taxon>Bacteria</taxon>
        <taxon>Pseudomonadati</taxon>
        <taxon>Pseudomonadota</taxon>
        <taxon>Gammaproteobacteria</taxon>
        <taxon>Enterobacterales</taxon>
        <taxon>Enterobacteriaceae</taxon>
        <taxon>Escherichia</taxon>
    </lineage>
</organism>
<proteinExistence type="inferred from homology"/>
<gene>
    <name evidence="1" type="primary">rpiA</name>
    <name type="ordered locus">Ecok1_28480</name>
    <name type="ORF">APECO1_3615</name>
</gene>
<keyword id="KW-0413">Isomerase</keyword>
<keyword id="KW-1185">Reference proteome</keyword>